<protein>
    <recommendedName>
        <fullName evidence="1">Ribonuclease 3</fullName>
        <ecNumber evidence="1">3.1.26.3</ecNumber>
    </recommendedName>
    <alternativeName>
        <fullName evidence="1">Ribonuclease III</fullName>
        <shortName evidence="1">RNase III</shortName>
    </alternativeName>
</protein>
<comment type="function">
    <text evidence="1">Digests double-stranded RNA. Involved in the processing of primary rRNA transcript to yield the immediate precursors to the large and small rRNAs (23S and 16S). Processes some mRNAs, and tRNAs when they are encoded in the rRNA operon. Processes pre-crRNA and tracrRNA of type II CRISPR loci if present in the organism.</text>
</comment>
<comment type="catalytic activity">
    <reaction evidence="1">
        <text>Endonucleolytic cleavage to 5'-phosphomonoester.</text>
        <dbReference type="EC" id="3.1.26.3"/>
    </reaction>
</comment>
<comment type="cofactor">
    <cofactor evidence="1">
        <name>Mg(2+)</name>
        <dbReference type="ChEBI" id="CHEBI:18420"/>
    </cofactor>
</comment>
<comment type="subunit">
    <text evidence="1">Homodimer.</text>
</comment>
<comment type="subcellular location">
    <subcellularLocation>
        <location evidence="1">Cytoplasm</location>
    </subcellularLocation>
</comment>
<comment type="similarity">
    <text evidence="1">Belongs to the ribonuclease III family.</text>
</comment>
<keyword id="KW-0963">Cytoplasm</keyword>
<keyword id="KW-0255">Endonuclease</keyword>
<keyword id="KW-0378">Hydrolase</keyword>
<keyword id="KW-0460">Magnesium</keyword>
<keyword id="KW-0479">Metal-binding</keyword>
<keyword id="KW-0507">mRNA processing</keyword>
<keyword id="KW-0540">Nuclease</keyword>
<keyword id="KW-0694">RNA-binding</keyword>
<keyword id="KW-0698">rRNA processing</keyword>
<keyword id="KW-0699">rRNA-binding</keyword>
<keyword id="KW-0819">tRNA processing</keyword>
<feature type="chain" id="PRO_1000094129" description="Ribonuclease 3">
    <location>
        <begin position="1"/>
        <end position="226"/>
    </location>
</feature>
<feature type="domain" description="RNase III" evidence="1">
    <location>
        <begin position="6"/>
        <end position="128"/>
    </location>
</feature>
<feature type="domain" description="DRBM" evidence="1">
    <location>
        <begin position="155"/>
        <end position="225"/>
    </location>
</feature>
<feature type="active site" evidence="1">
    <location>
        <position position="45"/>
    </location>
</feature>
<feature type="active site" evidence="1">
    <location>
        <position position="117"/>
    </location>
</feature>
<feature type="binding site" evidence="1">
    <location>
        <position position="41"/>
    </location>
    <ligand>
        <name>Mg(2+)</name>
        <dbReference type="ChEBI" id="CHEBI:18420"/>
    </ligand>
</feature>
<feature type="binding site" evidence="1">
    <location>
        <position position="114"/>
    </location>
    <ligand>
        <name>Mg(2+)</name>
        <dbReference type="ChEBI" id="CHEBI:18420"/>
    </ligand>
</feature>
<feature type="binding site" evidence="1">
    <location>
        <position position="117"/>
    </location>
    <ligand>
        <name>Mg(2+)</name>
        <dbReference type="ChEBI" id="CHEBI:18420"/>
    </ligand>
</feature>
<reference key="1">
    <citation type="journal article" date="2008" name="Genome Res.">
        <title>Comparative genome analysis of Salmonella enteritidis PT4 and Salmonella gallinarum 287/91 provides insights into evolutionary and host adaptation pathways.</title>
        <authorList>
            <person name="Thomson N.R."/>
            <person name="Clayton D.J."/>
            <person name="Windhorst D."/>
            <person name="Vernikos G."/>
            <person name="Davidson S."/>
            <person name="Churcher C."/>
            <person name="Quail M.A."/>
            <person name="Stevens M."/>
            <person name="Jones M.A."/>
            <person name="Watson M."/>
            <person name="Barron A."/>
            <person name="Layton A."/>
            <person name="Pickard D."/>
            <person name="Kingsley R.A."/>
            <person name="Bignell A."/>
            <person name="Clark L."/>
            <person name="Harris B."/>
            <person name="Ormond D."/>
            <person name="Abdellah Z."/>
            <person name="Brooks K."/>
            <person name="Cherevach I."/>
            <person name="Chillingworth T."/>
            <person name="Woodward J."/>
            <person name="Norberczak H."/>
            <person name="Lord A."/>
            <person name="Arrowsmith C."/>
            <person name="Jagels K."/>
            <person name="Moule S."/>
            <person name="Mungall K."/>
            <person name="Saunders M."/>
            <person name="Whitehead S."/>
            <person name="Chabalgoity J.A."/>
            <person name="Maskell D."/>
            <person name="Humphreys T."/>
            <person name="Roberts M."/>
            <person name="Barrow P.A."/>
            <person name="Dougan G."/>
            <person name="Parkhill J."/>
        </authorList>
    </citation>
    <scope>NUCLEOTIDE SEQUENCE [LARGE SCALE GENOMIC DNA]</scope>
    <source>
        <strain>P125109</strain>
    </source>
</reference>
<evidence type="ECO:0000255" key="1">
    <source>
        <dbReference type="HAMAP-Rule" id="MF_00104"/>
    </source>
</evidence>
<organism>
    <name type="scientific">Salmonella enteritidis PT4 (strain P125109)</name>
    <dbReference type="NCBI Taxonomy" id="550537"/>
    <lineage>
        <taxon>Bacteria</taxon>
        <taxon>Pseudomonadati</taxon>
        <taxon>Pseudomonadota</taxon>
        <taxon>Gammaproteobacteria</taxon>
        <taxon>Enterobacterales</taxon>
        <taxon>Enterobacteriaceae</taxon>
        <taxon>Salmonella</taxon>
    </lineage>
</organism>
<dbReference type="EC" id="3.1.26.3" evidence="1"/>
<dbReference type="EMBL" id="AM933172">
    <property type="protein sequence ID" value="CAR34143.1"/>
    <property type="molecule type" value="Genomic_DNA"/>
</dbReference>
<dbReference type="RefSeq" id="WP_001068341.1">
    <property type="nucleotide sequence ID" value="NC_011294.1"/>
</dbReference>
<dbReference type="SMR" id="B5QTU8"/>
<dbReference type="GeneID" id="66757008"/>
<dbReference type="KEGG" id="set:SEN2561"/>
<dbReference type="HOGENOM" id="CLU_000907_1_1_6"/>
<dbReference type="Proteomes" id="UP000000613">
    <property type="component" value="Chromosome"/>
</dbReference>
<dbReference type="GO" id="GO:0005737">
    <property type="term" value="C:cytoplasm"/>
    <property type="evidence" value="ECO:0007669"/>
    <property type="project" value="UniProtKB-SubCell"/>
</dbReference>
<dbReference type="GO" id="GO:0003725">
    <property type="term" value="F:double-stranded RNA binding"/>
    <property type="evidence" value="ECO:0007669"/>
    <property type="project" value="TreeGrafter"/>
</dbReference>
<dbReference type="GO" id="GO:0046872">
    <property type="term" value="F:metal ion binding"/>
    <property type="evidence" value="ECO:0007669"/>
    <property type="project" value="UniProtKB-KW"/>
</dbReference>
<dbReference type="GO" id="GO:0004525">
    <property type="term" value="F:ribonuclease III activity"/>
    <property type="evidence" value="ECO:0007669"/>
    <property type="project" value="UniProtKB-UniRule"/>
</dbReference>
<dbReference type="GO" id="GO:0019843">
    <property type="term" value="F:rRNA binding"/>
    <property type="evidence" value="ECO:0007669"/>
    <property type="project" value="UniProtKB-KW"/>
</dbReference>
<dbReference type="GO" id="GO:0006397">
    <property type="term" value="P:mRNA processing"/>
    <property type="evidence" value="ECO:0007669"/>
    <property type="project" value="UniProtKB-UniRule"/>
</dbReference>
<dbReference type="GO" id="GO:0010468">
    <property type="term" value="P:regulation of gene expression"/>
    <property type="evidence" value="ECO:0007669"/>
    <property type="project" value="TreeGrafter"/>
</dbReference>
<dbReference type="GO" id="GO:0006364">
    <property type="term" value="P:rRNA processing"/>
    <property type="evidence" value="ECO:0007669"/>
    <property type="project" value="UniProtKB-UniRule"/>
</dbReference>
<dbReference type="GO" id="GO:0008033">
    <property type="term" value="P:tRNA processing"/>
    <property type="evidence" value="ECO:0007669"/>
    <property type="project" value="UniProtKB-KW"/>
</dbReference>
<dbReference type="CDD" id="cd10845">
    <property type="entry name" value="DSRM_RNAse_III_family"/>
    <property type="match status" value="1"/>
</dbReference>
<dbReference type="CDD" id="cd00593">
    <property type="entry name" value="RIBOc"/>
    <property type="match status" value="1"/>
</dbReference>
<dbReference type="FunFam" id="1.10.1520.10:FF:000001">
    <property type="entry name" value="Ribonuclease 3"/>
    <property type="match status" value="1"/>
</dbReference>
<dbReference type="FunFam" id="3.30.160.20:FF:000003">
    <property type="entry name" value="Ribonuclease 3"/>
    <property type="match status" value="1"/>
</dbReference>
<dbReference type="Gene3D" id="3.30.160.20">
    <property type="match status" value="1"/>
</dbReference>
<dbReference type="Gene3D" id="1.10.1520.10">
    <property type="entry name" value="Ribonuclease III domain"/>
    <property type="match status" value="1"/>
</dbReference>
<dbReference type="HAMAP" id="MF_00104">
    <property type="entry name" value="RNase_III"/>
    <property type="match status" value="1"/>
</dbReference>
<dbReference type="InterPro" id="IPR014720">
    <property type="entry name" value="dsRBD_dom"/>
</dbReference>
<dbReference type="InterPro" id="IPR011907">
    <property type="entry name" value="RNase_III"/>
</dbReference>
<dbReference type="InterPro" id="IPR000999">
    <property type="entry name" value="RNase_III_dom"/>
</dbReference>
<dbReference type="InterPro" id="IPR036389">
    <property type="entry name" value="RNase_III_sf"/>
</dbReference>
<dbReference type="NCBIfam" id="TIGR02191">
    <property type="entry name" value="RNaseIII"/>
    <property type="match status" value="1"/>
</dbReference>
<dbReference type="PANTHER" id="PTHR11207:SF0">
    <property type="entry name" value="RIBONUCLEASE 3"/>
    <property type="match status" value="1"/>
</dbReference>
<dbReference type="PANTHER" id="PTHR11207">
    <property type="entry name" value="RIBONUCLEASE III"/>
    <property type="match status" value="1"/>
</dbReference>
<dbReference type="Pfam" id="PF00035">
    <property type="entry name" value="dsrm"/>
    <property type="match status" value="1"/>
</dbReference>
<dbReference type="Pfam" id="PF14622">
    <property type="entry name" value="Ribonucleas_3_3"/>
    <property type="match status" value="1"/>
</dbReference>
<dbReference type="SMART" id="SM00358">
    <property type="entry name" value="DSRM"/>
    <property type="match status" value="1"/>
</dbReference>
<dbReference type="SMART" id="SM00535">
    <property type="entry name" value="RIBOc"/>
    <property type="match status" value="1"/>
</dbReference>
<dbReference type="SUPFAM" id="SSF54768">
    <property type="entry name" value="dsRNA-binding domain-like"/>
    <property type="match status" value="1"/>
</dbReference>
<dbReference type="SUPFAM" id="SSF69065">
    <property type="entry name" value="RNase III domain-like"/>
    <property type="match status" value="1"/>
</dbReference>
<dbReference type="PROSITE" id="PS50137">
    <property type="entry name" value="DS_RBD"/>
    <property type="match status" value="1"/>
</dbReference>
<dbReference type="PROSITE" id="PS00517">
    <property type="entry name" value="RNASE_3_1"/>
    <property type="match status" value="1"/>
</dbReference>
<dbReference type="PROSITE" id="PS50142">
    <property type="entry name" value="RNASE_3_2"/>
    <property type="match status" value="1"/>
</dbReference>
<accession>B5QTU8</accession>
<sequence>MNPIVINRLQRKLGYTFNHQELLQQALTHRSASSKHNERLEFLGDSILSFVIANALYHRFPRVDEGDMSRMRATLVRGNTLAELAREFDLGECLRLGPGELKSGGFRRESILADTVEALIGGVFLDSNIQTVEQLILNWYKTRLDEISPGDKQKDPKTRLQEYLQGRHLPLPSYLVVQVRGEAHDQEFTIHCQVSGLSEPVVGTGSSRRKAEQAAAEQALKKLELE</sequence>
<name>RNC_SALEP</name>
<gene>
    <name evidence="1" type="primary">rnc</name>
    <name type="ordered locus">SEN2561</name>
</gene>
<proteinExistence type="inferred from homology"/>